<feature type="chain" id="PRO_0000127774" description="Cytochrome b6-f complex iron-sulfur subunit">
    <location>
        <begin position="1"/>
        <end position="186"/>
    </location>
</feature>
<feature type="transmembrane region" description="Helical" evidence="1">
    <location>
        <begin position="16"/>
        <end position="38"/>
    </location>
</feature>
<feature type="domain" description="Rieske" evidence="1">
    <location>
        <begin position="74"/>
        <end position="163"/>
    </location>
</feature>
<feature type="binding site" evidence="1">
    <location>
        <position position="109"/>
    </location>
    <ligand>
        <name>[2Fe-2S] cluster</name>
        <dbReference type="ChEBI" id="CHEBI:190135"/>
    </ligand>
</feature>
<feature type="binding site" evidence="1">
    <location>
        <position position="111"/>
    </location>
    <ligand>
        <name>[2Fe-2S] cluster</name>
        <dbReference type="ChEBI" id="CHEBI:190135"/>
    </ligand>
</feature>
<feature type="binding site" evidence="1">
    <location>
        <position position="127"/>
    </location>
    <ligand>
        <name>[2Fe-2S] cluster</name>
        <dbReference type="ChEBI" id="CHEBI:190135"/>
    </ligand>
</feature>
<feature type="binding site" evidence="1">
    <location>
        <position position="130"/>
    </location>
    <ligand>
        <name>[2Fe-2S] cluster</name>
        <dbReference type="ChEBI" id="CHEBI:190135"/>
    </ligand>
</feature>
<feature type="disulfide bond" evidence="1">
    <location>
        <begin position="114"/>
        <end position="129"/>
    </location>
</feature>
<name>UCRI_GLOVI</name>
<dbReference type="EC" id="7.1.1.6" evidence="1"/>
<dbReference type="EMBL" id="BA000045">
    <property type="protein sequence ID" value="BAC90979.1"/>
    <property type="molecule type" value="Genomic_DNA"/>
</dbReference>
<dbReference type="RefSeq" id="NP_925984.1">
    <property type="nucleotide sequence ID" value="NC_005125.1"/>
</dbReference>
<dbReference type="RefSeq" id="WP_011143031.1">
    <property type="nucleotide sequence ID" value="NC_005125.1"/>
</dbReference>
<dbReference type="SMR" id="Q7NCE1"/>
<dbReference type="STRING" id="251221.gene:10760543"/>
<dbReference type="EnsemblBacteria" id="BAC90979">
    <property type="protein sequence ID" value="BAC90979"/>
    <property type="gene ID" value="BAC90979"/>
</dbReference>
<dbReference type="KEGG" id="gvi:glr3038"/>
<dbReference type="PATRIC" id="fig|251221.4.peg.3068"/>
<dbReference type="eggNOG" id="COG0723">
    <property type="taxonomic scope" value="Bacteria"/>
</dbReference>
<dbReference type="HOGENOM" id="CLU_055690_8_0_3"/>
<dbReference type="InParanoid" id="Q7NCE1"/>
<dbReference type="OrthoDB" id="9767869at2"/>
<dbReference type="PhylomeDB" id="Q7NCE1"/>
<dbReference type="Proteomes" id="UP000000557">
    <property type="component" value="Chromosome"/>
</dbReference>
<dbReference type="GO" id="GO:0005886">
    <property type="term" value="C:plasma membrane"/>
    <property type="evidence" value="ECO:0000318"/>
    <property type="project" value="GO_Central"/>
</dbReference>
<dbReference type="GO" id="GO:0051537">
    <property type="term" value="F:2 iron, 2 sulfur cluster binding"/>
    <property type="evidence" value="ECO:0007669"/>
    <property type="project" value="UniProtKB-KW"/>
</dbReference>
<dbReference type="GO" id="GO:0045158">
    <property type="term" value="F:electron transporter, transferring electrons within cytochrome b6/f complex of photosystem II activity"/>
    <property type="evidence" value="ECO:0007669"/>
    <property type="project" value="UniProtKB-UniRule"/>
</dbReference>
<dbReference type="GO" id="GO:0046872">
    <property type="term" value="F:metal ion binding"/>
    <property type="evidence" value="ECO:0007669"/>
    <property type="project" value="UniProtKB-KW"/>
</dbReference>
<dbReference type="GO" id="GO:0004497">
    <property type="term" value="F:monooxygenase activity"/>
    <property type="evidence" value="ECO:0007669"/>
    <property type="project" value="UniProtKB-ARBA"/>
</dbReference>
<dbReference type="GO" id="GO:0016491">
    <property type="term" value="F:oxidoreductase activity"/>
    <property type="evidence" value="ECO:0000318"/>
    <property type="project" value="GO_Central"/>
</dbReference>
<dbReference type="GO" id="GO:0016705">
    <property type="term" value="F:oxidoreductase activity, acting on paired donors, with incorporation or reduction of molecular oxygen"/>
    <property type="evidence" value="ECO:0007669"/>
    <property type="project" value="UniProtKB-ARBA"/>
</dbReference>
<dbReference type="GO" id="GO:0009496">
    <property type="term" value="F:plastoquinol--plastocyanin reductase activity"/>
    <property type="evidence" value="ECO:0007669"/>
    <property type="project" value="UniProtKB-UniRule"/>
</dbReference>
<dbReference type="GO" id="GO:0015979">
    <property type="term" value="P:photosynthesis"/>
    <property type="evidence" value="ECO:0007669"/>
    <property type="project" value="UniProtKB-UniRule"/>
</dbReference>
<dbReference type="CDD" id="cd03471">
    <property type="entry name" value="Rieske_cytochrome_b6f"/>
    <property type="match status" value="1"/>
</dbReference>
<dbReference type="FunFam" id="2.102.10.10:FF:000007">
    <property type="entry name" value="Cytochrome b6-f complex iron-sulfur subunit"/>
    <property type="match status" value="1"/>
</dbReference>
<dbReference type="Gene3D" id="2.102.10.10">
    <property type="entry name" value="Rieske [2Fe-2S] iron-sulphur domain"/>
    <property type="match status" value="1"/>
</dbReference>
<dbReference type="Gene3D" id="1.20.5.700">
    <property type="entry name" value="Single helix bin"/>
    <property type="match status" value="1"/>
</dbReference>
<dbReference type="HAMAP" id="MF_01335">
    <property type="entry name" value="Cytb6_f_Rieske"/>
    <property type="match status" value="1"/>
</dbReference>
<dbReference type="InterPro" id="IPR023960">
    <property type="entry name" value="Cyt_b6_f_Rieske"/>
</dbReference>
<dbReference type="InterPro" id="IPR017941">
    <property type="entry name" value="Rieske_2Fe-2S"/>
</dbReference>
<dbReference type="InterPro" id="IPR036922">
    <property type="entry name" value="Rieske_2Fe-2S_sf"/>
</dbReference>
<dbReference type="InterPro" id="IPR014349">
    <property type="entry name" value="Rieske_Fe-S_prot"/>
</dbReference>
<dbReference type="InterPro" id="IPR005805">
    <property type="entry name" value="Rieske_Fe-S_prot_C"/>
</dbReference>
<dbReference type="InterPro" id="IPR006311">
    <property type="entry name" value="TAT_signal"/>
</dbReference>
<dbReference type="NCBIfam" id="NF010001">
    <property type="entry name" value="PRK13474.1"/>
    <property type="match status" value="1"/>
</dbReference>
<dbReference type="PANTHER" id="PTHR10134">
    <property type="entry name" value="CYTOCHROME B-C1 COMPLEX SUBUNIT RIESKE, MITOCHONDRIAL"/>
    <property type="match status" value="1"/>
</dbReference>
<dbReference type="Pfam" id="PF00355">
    <property type="entry name" value="Rieske"/>
    <property type="match status" value="1"/>
</dbReference>
<dbReference type="Pfam" id="PF25471">
    <property type="entry name" value="TM_PetC"/>
    <property type="match status" value="1"/>
</dbReference>
<dbReference type="PRINTS" id="PR00162">
    <property type="entry name" value="RIESKE"/>
</dbReference>
<dbReference type="SUPFAM" id="SSF50022">
    <property type="entry name" value="ISP domain"/>
    <property type="match status" value="1"/>
</dbReference>
<dbReference type="PROSITE" id="PS51296">
    <property type="entry name" value="RIESKE"/>
    <property type="match status" value="1"/>
</dbReference>
<dbReference type="PROSITE" id="PS51318">
    <property type="entry name" value="TAT"/>
    <property type="match status" value="1"/>
</dbReference>
<protein>
    <recommendedName>
        <fullName evidence="1">Cytochrome b6-f complex iron-sulfur subunit</fullName>
        <ecNumber evidence="1">7.1.1.6</ecNumber>
    </recommendedName>
    <alternativeName>
        <fullName evidence="1">Plastohydroquinone:plastocyanin oxidoreductase iron-sulfur protein</fullName>
        <shortName evidence="1">ISP</shortName>
        <shortName evidence="1">RISP</shortName>
    </alternativeName>
    <alternativeName>
        <fullName evidence="1">Rieske iron-sulfur protein</fullName>
    </alternativeName>
</protein>
<sequence>MSESAAQEIPMSRRQLLSFVTGGAIAATTAATLYPVVLYFLPPSTAGGGEGVAAKDKEGKDISVSKLLAAATPGEPVLTLGLDVNGGDATYIVINDQKEIANFGINAVCTHLGCVVPWDNGAKQFKCPCHGSVYNADGGLERGPAPQPLALVKATVSDDKVLIAPWTEQDFRCTDLWCNKDPYWVK</sequence>
<accession>Q7NCE1</accession>
<proteinExistence type="inferred from homology"/>
<keyword id="KW-0001">2Fe-2S</keyword>
<keyword id="KW-0997">Cell inner membrane</keyword>
<keyword id="KW-1003">Cell membrane</keyword>
<keyword id="KW-1015">Disulfide bond</keyword>
<keyword id="KW-0249">Electron transport</keyword>
<keyword id="KW-0408">Iron</keyword>
<keyword id="KW-0411">Iron-sulfur</keyword>
<keyword id="KW-0472">Membrane</keyword>
<keyword id="KW-0479">Metal-binding</keyword>
<keyword id="KW-1185">Reference proteome</keyword>
<keyword id="KW-1278">Translocase</keyword>
<keyword id="KW-0812">Transmembrane</keyword>
<keyword id="KW-1133">Transmembrane helix</keyword>
<keyword id="KW-0813">Transport</keyword>
<gene>
    <name evidence="1" type="primary">petC</name>
    <name type="ordered locus">glr3038</name>
</gene>
<organism>
    <name type="scientific">Gloeobacter violaceus (strain ATCC 29082 / PCC 7421)</name>
    <dbReference type="NCBI Taxonomy" id="251221"/>
    <lineage>
        <taxon>Bacteria</taxon>
        <taxon>Bacillati</taxon>
        <taxon>Cyanobacteriota</taxon>
        <taxon>Cyanophyceae</taxon>
        <taxon>Gloeobacterales</taxon>
        <taxon>Gloeobacteraceae</taxon>
        <taxon>Gloeobacter</taxon>
    </lineage>
</organism>
<reference key="1">
    <citation type="journal article" date="2003" name="DNA Res.">
        <title>Complete genome structure of Gloeobacter violaceus PCC 7421, a cyanobacterium that lacks thylakoids.</title>
        <authorList>
            <person name="Nakamura Y."/>
            <person name="Kaneko T."/>
            <person name="Sato S."/>
            <person name="Mimuro M."/>
            <person name="Miyashita H."/>
            <person name="Tsuchiya T."/>
            <person name="Sasamoto S."/>
            <person name="Watanabe A."/>
            <person name="Kawashima K."/>
            <person name="Kishida Y."/>
            <person name="Kiyokawa C."/>
            <person name="Kohara M."/>
            <person name="Matsumoto M."/>
            <person name="Matsuno A."/>
            <person name="Nakazaki N."/>
            <person name="Shimpo S."/>
            <person name="Takeuchi C."/>
            <person name="Yamada M."/>
            <person name="Tabata S."/>
        </authorList>
    </citation>
    <scope>NUCLEOTIDE SEQUENCE [LARGE SCALE GENOMIC DNA]</scope>
    <source>
        <strain>ATCC 29082 / PCC 7421</strain>
    </source>
</reference>
<comment type="function">
    <text evidence="1">Component of the cytochrome b6-f complex, which mediates electron transfer between photosystem II (PSII) and photosystem I (PSI), cyclic electron flow around PSI, and state transitions.</text>
</comment>
<comment type="catalytic activity">
    <reaction evidence="1">
        <text>2 oxidized [plastocyanin] + a plastoquinol + 2 H(+)(in) = 2 reduced [plastocyanin] + a plastoquinone + 4 H(+)(out)</text>
        <dbReference type="Rhea" id="RHEA:22148"/>
        <dbReference type="Rhea" id="RHEA-COMP:9561"/>
        <dbReference type="Rhea" id="RHEA-COMP:9562"/>
        <dbReference type="Rhea" id="RHEA-COMP:10039"/>
        <dbReference type="Rhea" id="RHEA-COMP:10040"/>
        <dbReference type="ChEBI" id="CHEBI:15378"/>
        <dbReference type="ChEBI" id="CHEBI:17757"/>
        <dbReference type="ChEBI" id="CHEBI:29036"/>
        <dbReference type="ChEBI" id="CHEBI:49552"/>
        <dbReference type="ChEBI" id="CHEBI:62192"/>
        <dbReference type="EC" id="7.1.1.6"/>
    </reaction>
</comment>
<comment type="cofactor">
    <cofactor evidence="1">
        <name>[2Fe-2S] cluster</name>
        <dbReference type="ChEBI" id="CHEBI:190135"/>
    </cofactor>
    <text evidence="1">Binds 1 [2Fe-2S] cluster per subunit.</text>
</comment>
<comment type="subunit">
    <text evidence="1">The 4 large subunits of the cytochrome b6-f complex are cytochrome b6, subunit IV (17 kDa polypeptide, PetD), cytochrome f and the Rieske protein, while the 4 small subunits are PetG, PetL, PetM and PetN. The complex functions as a dimer.</text>
</comment>
<comment type="subcellular location">
    <subcellularLocation>
        <location evidence="1">Cell inner membrane</location>
        <topology evidence="1">Single-pass membrane protein</topology>
    </subcellularLocation>
    <text evidence="1">The transmembrane helix obliquely spans the membrane in one monomer, and its extrinsic C-terminal domain is part of the other monomer.</text>
</comment>
<comment type="miscellaneous">
    <text>The Rieske iron-sulfur protein is a high potential 2Fe-2S protein.</text>
</comment>
<comment type="similarity">
    <text evidence="1">Belongs to the Rieske iron-sulfur protein family.</text>
</comment>
<evidence type="ECO:0000255" key="1">
    <source>
        <dbReference type="HAMAP-Rule" id="MF_01335"/>
    </source>
</evidence>